<evidence type="ECO:0000255" key="1">
    <source>
        <dbReference type="HAMAP-Rule" id="MF_04073"/>
    </source>
</evidence>
<evidence type="ECO:0000256" key="2">
    <source>
        <dbReference type="SAM" id="MobiDB-lite"/>
    </source>
</evidence>
<organism>
    <name type="scientific">Woolly monkey hepatitis B virus (isolate Louisville)</name>
    <name type="common">WMHBV</name>
    <dbReference type="NCBI Taxonomy" id="490134"/>
    <lineage>
        <taxon>Viruses</taxon>
        <taxon>Riboviria</taxon>
        <taxon>Pararnavirae</taxon>
        <taxon>Artverviricota</taxon>
        <taxon>Revtraviricetes</taxon>
        <taxon>Blubervirales</taxon>
        <taxon>Hepadnaviridae</taxon>
        <taxon>Orthohepadnavirus</taxon>
        <taxon>Woolly monkey hepatitis B virus</taxon>
    </lineage>
</organism>
<proteinExistence type="inferred from homology"/>
<dbReference type="EC" id="2.7.7.7" evidence="1"/>
<dbReference type="EC" id="2.7.7.49" evidence="1"/>
<dbReference type="EC" id="3.1.26.4" evidence="1"/>
<dbReference type="EMBL" id="AF046996">
    <property type="protein sequence ID" value="AAC16908.1"/>
    <property type="molecule type" value="Genomic_DNA"/>
</dbReference>
<dbReference type="Proteomes" id="UP000008599">
    <property type="component" value="Segment"/>
</dbReference>
<dbReference type="GO" id="GO:0003677">
    <property type="term" value="F:DNA binding"/>
    <property type="evidence" value="ECO:0007669"/>
    <property type="project" value="UniProtKB-UniRule"/>
</dbReference>
<dbReference type="GO" id="GO:0003887">
    <property type="term" value="F:DNA-directed DNA polymerase activity"/>
    <property type="evidence" value="ECO:0007669"/>
    <property type="project" value="UniProtKB-UniRule"/>
</dbReference>
<dbReference type="GO" id="GO:0046872">
    <property type="term" value="F:metal ion binding"/>
    <property type="evidence" value="ECO:0007669"/>
    <property type="project" value="UniProtKB-UniRule"/>
</dbReference>
<dbReference type="GO" id="GO:0003964">
    <property type="term" value="F:RNA-directed DNA polymerase activity"/>
    <property type="evidence" value="ECO:0007669"/>
    <property type="project" value="UniProtKB-UniRule"/>
</dbReference>
<dbReference type="GO" id="GO:0004523">
    <property type="term" value="F:RNA-DNA hybrid ribonuclease activity"/>
    <property type="evidence" value="ECO:0007669"/>
    <property type="project" value="UniProtKB-UniRule"/>
</dbReference>
<dbReference type="GO" id="GO:0006260">
    <property type="term" value="P:DNA replication"/>
    <property type="evidence" value="ECO:0007669"/>
    <property type="project" value="UniProtKB-UniRule"/>
</dbReference>
<dbReference type="GO" id="GO:0052170">
    <property type="term" value="P:symbiont-mediated suppression of host innate immune response"/>
    <property type="evidence" value="ECO:0007669"/>
    <property type="project" value="UniProtKB-UniRule"/>
</dbReference>
<dbReference type="Gene3D" id="3.30.70.270">
    <property type="match status" value="1"/>
</dbReference>
<dbReference type="HAMAP" id="MF_04073">
    <property type="entry name" value="HBV_DPOL"/>
    <property type="match status" value="1"/>
</dbReference>
<dbReference type="InterPro" id="IPR043502">
    <property type="entry name" value="DNA/RNA_pol_sf"/>
</dbReference>
<dbReference type="InterPro" id="IPR001462">
    <property type="entry name" value="DNApol_viral_C"/>
</dbReference>
<dbReference type="InterPro" id="IPR000201">
    <property type="entry name" value="DNApol_viral_N"/>
</dbReference>
<dbReference type="InterPro" id="IPR037531">
    <property type="entry name" value="HBV_DPOL"/>
</dbReference>
<dbReference type="InterPro" id="IPR052055">
    <property type="entry name" value="Hepadnavirus_pol/RT"/>
</dbReference>
<dbReference type="InterPro" id="IPR043128">
    <property type="entry name" value="Rev_trsase/Diguanyl_cyclase"/>
</dbReference>
<dbReference type="InterPro" id="IPR000477">
    <property type="entry name" value="RT_dom"/>
</dbReference>
<dbReference type="PANTHER" id="PTHR33050">
    <property type="entry name" value="REVERSE TRANSCRIPTASE DOMAIN-CONTAINING PROTEIN"/>
    <property type="match status" value="1"/>
</dbReference>
<dbReference type="PANTHER" id="PTHR33050:SF7">
    <property type="entry name" value="RIBONUCLEASE H"/>
    <property type="match status" value="1"/>
</dbReference>
<dbReference type="Pfam" id="PF00336">
    <property type="entry name" value="DNA_pol_viral_C"/>
    <property type="match status" value="1"/>
</dbReference>
<dbReference type="Pfam" id="PF00242">
    <property type="entry name" value="DNA_pol_viral_N"/>
    <property type="match status" value="1"/>
</dbReference>
<dbReference type="Pfam" id="PF00078">
    <property type="entry name" value="RVT_1"/>
    <property type="match status" value="1"/>
</dbReference>
<dbReference type="SUPFAM" id="SSF56672">
    <property type="entry name" value="DNA/RNA polymerases"/>
    <property type="match status" value="1"/>
</dbReference>
<dbReference type="PROSITE" id="PS50878">
    <property type="entry name" value="RT_POL"/>
    <property type="match status" value="1"/>
</dbReference>
<sequence>MPLSYQHFRKLLLLDEGDPLEDALPRLADEDLNRRVAEGLNLQHLPVSIPWTHKVGPFSGLYSVSTLTFNPQWKTPQFPLIHLKEDLIPFIESYFGPLTSNEKRRLKLVLPARFYPKATKYFPLEKGIKPHYPNDVVNHYYQVQHYLHTLWEAGVLYKRETTHSASFFGTPYTWEHKLQHGTQPVNVQPAGILSQSSAGPPVQGQCRLSRLGQKSKQGPLATSPRHGSGGLWSRTSATPWRPSGVEFTSSGFVCHSARHPSSSINQSRQRKETNTSYSSSERHSPTSHDLEHVLLPELSSESKGQRPLLSCWWLNFKHCQPCSDHCLHHIVKLLDDWGPCQHHGHHFIRIPRTPSRITGGVFLVDKNPHNATESRLVVDFSQFSRGNTSVSWPKFAVPNLQSLTNLLSTDLSWVSLDVFAAFYHLPLHPASMPHLLVGSSGLPRYVARVSSSTNSYRNNNNNGTLQDLHANCSRHLFVSLMLLYQTYGRKLHLYSHPLIMGFRKVPMGLGLSPFLLAQFTSAICSVVRRAFPHCMAFSYMDDVVLGAKSVQHLESLLASVTTFLLALGIHLNPEKTKRWGKALNFMGYVIGGYGSLPQQHIRDKIALCFQKLPCNRPIDWKVCQRIVGLLGFVAPFTQCGYAALMPIYTCIQKHQAFTFSLVYKTFLKDQYMHLYPVARQRAGHCQVFADATPTGWGLVMGNQRMRGTFLSPLPIHTAELLAACFARCWSGAKLIGTDNAVVLSRKYTHFPWLLGCAATWILRGTCFVYVPSKLNPADDPSRGCLGLLKPLPRLLFQPSTGRTSLYAVSPPVPFHRPGRVLFASPLQPGDAWRPP</sequence>
<reference key="1">
    <citation type="journal article" date="1998" name="Proc. Natl. Acad. Sci. U.S.A.">
        <title>Isolation of a hepadnavirus from the woolly monkey, a New World primate.</title>
        <authorList>
            <person name="Lanford R.E."/>
            <person name="Chavez D."/>
            <person name="Brasky K.M."/>
            <person name="Burns R.B. III"/>
            <person name="Rico-Hesse R."/>
        </authorList>
    </citation>
    <scope>NUCLEOTIDE SEQUENCE [GENOMIC DNA]</scope>
</reference>
<reference key="2">
    <citation type="journal article" date="2007" name="World J. Gastroenterol.">
        <title>Hepatitis B virus replication.</title>
        <authorList>
            <person name="Beck J."/>
            <person name="Nassal M."/>
        </authorList>
    </citation>
    <scope>REVIEW</scope>
</reference>
<keyword id="KW-0235">DNA replication</keyword>
<keyword id="KW-0238">DNA-binding</keyword>
<keyword id="KW-0239">DNA-directed DNA polymerase</keyword>
<keyword id="KW-0255">Endonuclease</keyword>
<keyword id="KW-0945">Host-virus interaction</keyword>
<keyword id="KW-0378">Hydrolase</keyword>
<keyword id="KW-1090">Inhibition of host innate immune response by virus</keyword>
<keyword id="KW-1113">Inhibition of host RLR pathway by virus</keyword>
<keyword id="KW-0460">Magnesium</keyword>
<keyword id="KW-0479">Metal-binding</keyword>
<keyword id="KW-0511">Multifunctional enzyme</keyword>
<keyword id="KW-0540">Nuclease</keyword>
<keyword id="KW-0548">Nucleotidyltransferase</keyword>
<keyword id="KW-0695">RNA-directed DNA polymerase</keyword>
<keyword id="KW-0808">Transferase</keyword>
<keyword id="KW-0899">Viral immunoevasion</keyword>
<name>DPOL_WMHBV</name>
<comment type="function">
    <text evidence="1">Multifunctional enzyme that converts the viral RNA genome into dsDNA in viral cytoplasmic capsids. This enzyme displays a DNA polymerase activity that can copy either DNA or RNA templates, and a ribonuclease H (RNase H) activity that cleaves the RNA strand of RNA-DNA heteroduplexes in a partially processive 3'- to 5'-endonucleasic mode. Neo-synthesized pregenomic RNA (pgRNA) are encapsidated together with the P protein, and reverse-transcribed inside the nucleocapsid. Initiation of reverse-transcription occurs first by binding the epsilon loop on the pgRNA genome, and is initiated by protein priming, thereby the 5'-end of (-)DNA is covalently linked to P protein. Partial (+)DNA is synthesized from the (-)DNA template and generates the relaxed circular DNA (RC-DNA) genome. After budding and infection, the RC-DNA migrates in the nucleus, and is converted into a plasmid-like covalently closed circular DNA (cccDNA). The activity of P protein does not seem to be necessary for cccDNA generation, and is presumably released from (+)DNA by host nuclear DNA repair machinery.</text>
</comment>
<comment type="catalytic activity">
    <reaction evidence="1">
        <text>DNA(n) + a 2'-deoxyribonucleoside 5'-triphosphate = DNA(n+1) + diphosphate</text>
        <dbReference type="Rhea" id="RHEA:22508"/>
        <dbReference type="Rhea" id="RHEA-COMP:17339"/>
        <dbReference type="Rhea" id="RHEA-COMP:17340"/>
        <dbReference type="ChEBI" id="CHEBI:33019"/>
        <dbReference type="ChEBI" id="CHEBI:61560"/>
        <dbReference type="ChEBI" id="CHEBI:173112"/>
        <dbReference type="EC" id="2.7.7.7"/>
    </reaction>
</comment>
<comment type="catalytic activity">
    <reaction evidence="1">
        <text>DNA(n) + a 2'-deoxyribonucleoside 5'-triphosphate = DNA(n+1) + diphosphate</text>
        <dbReference type="Rhea" id="RHEA:22508"/>
        <dbReference type="Rhea" id="RHEA-COMP:17339"/>
        <dbReference type="Rhea" id="RHEA-COMP:17340"/>
        <dbReference type="ChEBI" id="CHEBI:33019"/>
        <dbReference type="ChEBI" id="CHEBI:61560"/>
        <dbReference type="ChEBI" id="CHEBI:173112"/>
        <dbReference type="EC" id="2.7.7.49"/>
    </reaction>
</comment>
<comment type="catalytic activity">
    <reaction evidence="1">
        <text>Endonucleolytic cleavage to 5'-phosphomonoester.</text>
        <dbReference type="EC" id="3.1.26.4"/>
    </reaction>
</comment>
<comment type="activity regulation">
    <text evidence="1">Activated by host HSP70 and HSP40 in vitro to be able to bind the epsilon loop of the pgRNA. Because deletion of the RNase H region renders the protein partly chaperone-independent, the chaperones may be needed indirectly to relieve occlusion of the RNA-binding site by this domain. Inhibited by several reverse-transcriptase inhibitors: Lamivudine, Adefovir and Entecavir.</text>
</comment>
<comment type="domain">
    <text evidence="1">Terminal protein domain (TP) is hepadnavirus-specific. Spacer domain is highly variable and separates the TP and RT domains. Polymerase/reverse-transcriptase domain (RT) and ribonuclease H domain (RH) are similar to retrovirus reverse transcriptase/RNase H.</text>
</comment>
<comment type="domain">
    <text evidence="1">The polymerase/reverse transcriptase (RT) and ribonuclease H (RH) domains are structured in five subdomains: finger, palm, thumb, connection and RNase H. Within the palm subdomain, the 'primer grip' region is thought to be involved in the positioning of the primer terminus for accommodating the incoming nucleotide. The RH domain stabilizes the association of RT with primer-template.</text>
</comment>
<comment type="miscellaneous">
    <text evidence="1">Hepadnaviral virions contain probably just one P protein molecule per particle.</text>
</comment>
<comment type="similarity">
    <text evidence="1">Belongs to the hepadnaviridae P protein family.</text>
</comment>
<protein>
    <recommendedName>
        <fullName evidence="1">Protein P</fullName>
    </recommendedName>
    <domain>
        <recommendedName>
            <fullName evidence="1">DNA-directed DNA polymerase</fullName>
            <ecNumber evidence="1">2.7.7.7</ecNumber>
        </recommendedName>
    </domain>
    <domain>
        <recommendedName>
            <fullName evidence="1">RNA-directed DNA polymerase</fullName>
            <ecNumber evidence="1">2.7.7.49</ecNumber>
        </recommendedName>
    </domain>
    <domain>
        <recommendedName>
            <fullName evidence="1">Ribonuclease H</fullName>
            <ecNumber evidence="1">3.1.26.4</ecNumber>
        </recommendedName>
    </domain>
</protein>
<gene>
    <name evidence="1" type="primary">P</name>
</gene>
<organismHost>
    <name type="scientific">Lagothrix lagotricha</name>
    <name type="common">Brown woolly monkey</name>
    <name type="synonym">Humboldt's woolly monkey</name>
    <dbReference type="NCBI Taxonomy" id="9519"/>
</organismHost>
<accession>O71304</accession>
<feature type="chain" id="PRO_0000323286" description="Protein P">
    <location>
        <begin position="1"/>
        <end position="835"/>
    </location>
</feature>
<feature type="domain" description="Reverse transcriptase" evidence="1">
    <location>
        <begin position="345"/>
        <end position="590"/>
    </location>
</feature>
<feature type="region of interest" description="Terminal protein domain (TP)" evidence="1">
    <location>
        <begin position="1"/>
        <end position="176"/>
    </location>
</feature>
<feature type="region of interest" description="Spacer" evidence="1">
    <location>
        <begin position="177"/>
        <end position="334"/>
    </location>
</feature>
<feature type="region of interest" description="Disordered" evidence="2">
    <location>
        <begin position="211"/>
        <end position="235"/>
    </location>
</feature>
<feature type="region of interest" description="Disordered" evidence="2">
    <location>
        <begin position="258"/>
        <end position="288"/>
    </location>
</feature>
<feature type="region of interest" description="Polymerase/reverse transcriptase domain (RT)" evidence="1">
    <location>
        <begin position="335"/>
        <end position="680"/>
    </location>
</feature>
<feature type="binding site" evidence="1">
    <location>
        <position position="417"/>
    </location>
    <ligand>
        <name>Mg(2+)</name>
        <dbReference type="ChEBI" id="CHEBI:18420"/>
        <note>catalytic</note>
    </ligand>
</feature>
<feature type="binding site" evidence="1">
    <location>
        <position position="541"/>
    </location>
    <ligand>
        <name>Mg(2+)</name>
        <dbReference type="ChEBI" id="CHEBI:18420"/>
        <note>catalytic</note>
    </ligand>
</feature>
<feature type="binding site" evidence="1">
    <location>
        <position position="542"/>
    </location>
    <ligand>
        <name>Mg(2+)</name>
        <dbReference type="ChEBI" id="CHEBI:18420"/>
        <note>catalytic</note>
    </ligand>
</feature>
<feature type="site" description="Priming of reverse-transcription by covalently linking the first nucleotide of the (-)DNA" evidence="1">
    <location>
        <position position="62"/>
    </location>
</feature>